<organism>
    <name type="scientific">Solidesulfovibrio magneticus (strain ATCC 700980 / DSM 13731 / RS-1)</name>
    <name type="common">Desulfovibrio magneticus</name>
    <dbReference type="NCBI Taxonomy" id="573370"/>
    <lineage>
        <taxon>Bacteria</taxon>
        <taxon>Pseudomonadati</taxon>
        <taxon>Thermodesulfobacteriota</taxon>
        <taxon>Desulfovibrionia</taxon>
        <taxon>Desulfovibrionales</taxon>
        <taxon>Desulfovibrionaceae</taxon>
        <taxon>Solidesulfovibrio</taxon>
    </lineage>
</organism>
<keyword id="KW-0687">Ribonucleoprotein</keyword>
<keyword id="KW-0689">Ribosomal protein</keyword>
<keyword id="KW-0694">RNA-binding</keyword>
<keyword id="KW-0699">rRNA-binding</keyword>
<dbReference type="EMBL" id="AP010904">
    <property type="protein sequence ID" value="BAH74713.1"/>
    <property type="molecule type" value="Genomic_DNA"/>
</dbReference>
<dbReference type="RefSeq" id="WP_006920469.1">
    <property type="nucleotide sequence ID" value="NC_012796.1"/>
</dbReference>
<dbReference type="SMR" id="C4XLX5"/>
<dbReference type="STRING" id="573370.DMR_12220"/>
<dbReference type="KEGG" id="dma:DMR_12220"/>
<dbReference type="eggNOG" id="COG0089">
    <property type="taxonomic scope" value="Bacteria"/>
</dbReference>
<dbReference type="HOGENOM" id="CLU_037562_3_1_7"/>
<dbReference type="OrthoDB" id="9793353at2"/>
<dbReference type="Proteomes" id="UP000009071">
    <property type="component" value="Chromosome"/>
</dbReference>
<dbReference type="GO" id="GO:1990904">
    <property type="term" value="C:ribonucleoprotein complex"/>
    <property type="evidence" value="ECO:0007669"/>
    <property type="project" value="UniProtKB-KW"/>
</dbReference>
<dbReference type="GO" id="GO:0005840">
    <property type="term" value="C:ribosome"/>
    <property type="evidence" value="ECO:0007669"/>
    <property type="project" value="UniProtKB-KW"/>
</dbReference>
<dbReference type="GO" id="GO:0019843">
    <property type="term" value="F:rRNA binding"/>
    <property type="evidence" value="ECO:0007669"/>
    <property type="project" value="UniProtKB-UniRule"/>
</dbReference>
<dbReference type="GO" id="GO:0003735">
    <property type="term" value="F:structural constituent of ribosome"/>
    <property type="evidence" value="ECO:0007669"/>
    <property type="project" value="InterPro"/>
</dbReference>
<dbReference type="GO" id="GO:0006412">
    <property type="term" value="P:translation"/>
    <property type="evidence" value="ECO:0007669"/>
    <property type="project" value="UniProtKB-UniRule"/>
</dbReference>
<dbReference type="Gene3D" id="3.30.70.330">
    <property type="match status" value="1"/>
</dbReference>
<dbReference type="HAMAP" id="MF_01369_B">
    <property type="entry name" value="Ribosomal_uL23_B"/>
    <property type="match status" value="1"/>
</dbReference>
<dbReference type="InterPro" id="IPR012677">
    <property type="entry name" value="Nucleotide-bd_a/b_plait_sf"/>
</dbReference>
<dbReference type="InterPro" id="IPR013025">
    <property type="entry name" value="Ribosomal_uL23-like"/>
</dbReference>
<dbReference type="InterPro" id="IPR012678">
    <property type="entry name" value="Ribosomal_uL23/eL15/eS24_sf"/>
</dbReference>
<dbReference type="InterPro" id="IPR001014">
    <property type="entry name" value="Ribosomal_uL23_CS"/>
</dbReference>
<dbReference type="NCBIfam" id="NF004363">
    <property type="entry name" value="PRK05738.2-4"/>
    <property type="match status" value="1"/>
</dbReference>
<dbReference type="PANTHER" id="PTHR11620">
    <property type="entry name" value="60S RIBOSOMAL PROTEIN L23A"/>
    <property type="match status" value="1"/>
</dbReference>
<dbReference type="Pfam" id="PF00276">
    <property type="entry name" value="Ribosomal_L23"/>
    <property type="match status" value="1"/>
</dbReference>
<dbReference type="SUPFAM" id="SSF54189">
    <property type="entry name" value="Ribosomal proteins S24e, L23 and L15e"/>
    <property type="match status" value="1"/>
</dbReference>
<dbReference type="PROSITE" id="PS00050">
    <property type="entry name" value="RIBOSOMAL_L23"/>
    <property type="match status" value="1"/>
</dbReference>
<name>RL23_SOLM1</name>
<accession>C4XLX5</accession>
<feature type="chain" id="PRO_1000215031" description="Large ribosomal subunit protein uL23">
    <location>
        <begin position="1"/>
        <end position="96"/>
    </location>
</feature>
<evidence type="ECO:0000255" key="1">
    <source>
        <dbReference type="HAMAP-Rule" id="MF_01369"/>
    </source>
</evidence>
<evidence type="ECO:0000305" key="2"/>
<protein>
    <recommendedName>
        <fullName evidence="1">Large ribosomal subunit protein uL23</fullName>
    </recommendedName>
    <alternativeName>
        <fullName evidence="2">50S ribosomal protein L23</fullName>
    </alternativeName>
</protein>
<reference key="1">
    <citation type="journal article" date="2009" name="Genome Res.">
        <title>Whole genome sequence of Desulfovibrio magneticus strain RS-1 revealed common gene clusters in magnetotactic bacteria.</title>
        <authorList>
            <person name="Nakazawa H."/>
            <person name="Arakaki A."/>
            <person name="Narita-Yamada S."/>
            <person name="Yashiro I."/>
            <person name="Jinno K."/>
            <person name="Aoki N."/>
            <person name="Tsuruyama A."/>
            <person name="Okamura Y."/>
            <person name="Tanikawa S."/>
            <person name="Fujita N."/>
            <person name="Takeyama H."/>
            <person name="Matsunaga T."/>
        </authorList>
    </citation>
    <scope>NUCLEOTIDE SEQUENCE [LARGE SCALE GENOMIC DNA]</scope>
    <source>
        <strain>ATCC 700980 / DSM 13731 / RS-1</strain>
    </source>
</reference>
<sequence>MEYANILLKPVISEKATMVKDAANQVVFFVHPAANKIEIAKAVEKAFSVTVKGVRVVKHKSLARSRMGRVTGRIPGYKKAYVTLAQGDKIEFFEGV</sequence>
<proteinExistence type="inferred from homology"/>
<comment type="function">
    <text evidence="1">One of the early assembly proteins it binds 23S rRNA. One of the proteins that surrounds the polypeptide exit tunnel on the outside of the ribosome. Forms the main docking site for trigger factor binding to the ribosome.</text>
</comment>
<comment type="subunit">
    <text evidence="1">Part of the 50S ribosomal subunit. Contacts protein L29, and trigger factor when it is bound to the ribosome.</text>
</comment>
<comment type="similarity">
    <text evidence="1">Belongs to the universal ribosomal protein uL23 family.</text>
</comment>
<gene>
    <name evidence="1" type="primary">rplW</name>
    <name type="ordered locus">DMR_12220</name>
</gene>